<proteinExistence type="inferred from homology"/>
<protein>
    <recommendedName>
        <fullName>Ice nucleation protein</fullName>
    </recommendedName>
</protein>
<comment type="function">
    <text>Ice nucleation proteins enable bacteria to nucleate crystallization in supercooled water.</text>
</comment>
<comment type="subcellular location">
    <subcellularLocation>
        <location evidence="1">Cell outer membrane</location>
        <topology evidence="1">Peripheral membrane protein</topology>
    </subcellularLocation>
</comment>
<comment type="domain">
    <text>Contains many imperfect repeats of a consensus octapeptide A-G-Y-G-S-T-L-T; further on a 16-residue and a regional 48-residue periodicity is superimposed.</text>
</comment>
<comment type="similarity">
    <text evidence="3">Belongs to the bacterial ice nucleation protein family.</text>
</comment>
<name>ICEK_PSESX</name>
<reference key="1">
    <citation type="submission" date="1997-07" db="EMBL/GenBank/DDBJ databases">
        <authorList>
            <person name="Jung H.-C."/>
            <person name="Pan J.-G."/>
        </authorList>
    </citation>
    <scope>NUCLEOTIDE SEQUENCE [GENOMIC DNA]</scope>
    <source>
        <strain>KCTC 1832</strain>
    </source>
</reference>
<keyword id="KW-0998">Cell outer membrane</keyword>
<keyword id="KW-0387">Ice nucleation</keyword>
<keyword id="KW-0472">Membrane</keyword>
<keyword id="KW-0677">Repeat</keyword>
<dbReference type="EMBL" id="AF013159">
    <property type="protein sequence ID" value="AAB66891.1"/>
    <property type="molecule type" value="Genomic_DNA"/>
</dbReference>
<dbReference type="GO" id="GO:0009279">
    <property type="term" value="C:cell outer membrane"/>
    <property type="evidence" value="ECO:0007669"/>
    <property type="project" value="UniProtKB-SubCell"/>
</dbReference>
<dbReference type="GO" id="GO:0050825">
    <property type="term" value="F:ice binding"/>
    <property type="evidence" value="ECO:0007669"/>
    <property type="project" value="UniProtKB-KW"/>
</dbReference>
<dbReference type="InterPro" id="IPR000258">
    <property type="entry name" value="Ice_nucleatn"/>
</dbReference>
<dbReference type="PANTHER" id="PTHR31294">
    <property type="match status" value="1"/>
</dbReference>
<dbReference type="PANTHER" id="PTHR31294:SF8">
    <property type="entry name" value="KERATIN-ASSOCIATED PROTEIN 21-1-RELATED"/>
    <property type="match status" value="1"/>
</dbReference>
<dbReference type="Pfam" id="PF00818">
    <property type="entry name" value="Ice_nucleation"/>
    <property type="match status" value="35"/>
</dbReference>
<dbReference type="PRINTS" id="PR00327">
    <property type="entry name" value="ICENUCLEATN"/>
</dbReference>
<dbReference type="SUPFAM" id="SSF69349">
    <property type="entry name" value="Phage fibre proteins"/>
    <property type="match status" value="8"/>
</dbReference>
<dbReference type="PROSITE" id="PS00314">
    <property type="entry name" value="ICE_NUCLEATION"/>
    <property type="match status" value="38"/>
</dbReference>
<gene>
    <name type="primary">inaK</name>
</gene>
<sequence>MTLDKALVLRTCANNMADHCGLIWPASGTVESRYWQSTRRHENGLVGLLWGAGTSAFLSVHADARWIVCEVAVADIISLEEPGMVKFPRAEVVHVGDRISASHFISARQADPASTSTSTSTSTLTPMPTAIPTPMPAVASVTLPVAEQARHEVFDVASVSAAAAPVNTLPVTTPQNLQTATYGSTLSGDNHSRLIAGYGSNETAGNHSDLIAGYGSTGTAGYGSTQTSGEDSSLTAGYGSTQTAQEGSNLTAGYGSTGTAGSDSSLIAGYGSTQTSGGDSSLTAGYGSTQTAQEGSNLTAGYGSTGTAGVDSSLIAGYGSTQTSGSDSALTAGYGSTQTAQEGSNLTAGYGSTGTAGSDSSLIAGYGSTQTSGSDSSLTAGYGSTQTAQEGSNLTAGYGSTGTAGVDSSLIAGYGSTQTSGSDSALTAGYGSTQTAQEGSNLTAGYGSTGTAGADSSLIAGYGSTQTSGSESSLTAGYGSTQTAREGSTLTAGYGSTGTAGADSSLIAGYGSTQTSGSESSLTAGYGSTQTAQQGSVLTSGYGSTQTAGAASNLTTGYGSTGTAGHESFIIAGYGSTQTAGHKSILTAGYGSTQTARDGSYLIAGYGSTGTAGSGSSLIAGYGSTQTASYRSMLTAGYGSTQTAREHSDLVTGYGSTSTAGSNSSLIAGYGSTQTAGFKSILTAGYGSTQTAQERSDLVAGYGSTSTAGYSSSLIAGYGSTQTAGYESTLTAGYGSTQTAQENSSLTTGYGSTSTAGYSSSLIAGYGSTQTAGYESTLTAGYGSTQTAQERSDLVTGYGSTSTAGYASSLIAGYGSTQTAGYESTLTAGYGSTQTAQENSSLTTGYGSTSTAGFASSLIAGYGSTQTAGYKSTLTAGYGSTQTAEYGSSLTAGYGSTATAGQDSSLIAGYGSSLTSGIRSFLTAGYGSTLIAGLRSVLIAGYGSSLTSGIRSTLTAGYGSNQIASYGSSLIAGHESIQVAGNKSMLIAGKGSSQTAGFRSTLIAGAGSVQLAGDRSRLIAGADSNQTAGDRSKLLAGNNSYLTAGDRSKLTGGHDCTLMAGDQSRLTAGKNSVLTAGARSKLIGSEGSTLSAGEDSTLIFRLWDGKRYRQLVARTGENGVEADIPYYVNEDDDIVDKPDEDDDWIEVK</sequence>
<accession>O30611</accession>
<feature type="chain" id="PRO_0000204025" description="Ice nucleation protein">
    <location>
        <begin position="1"/>
        <end position="1148"/>
    </location>
</feature>
<feature type="region of interest" description="Disordered" evidence="2">
    <location>
        <begin position="110"/>
        <end position="131"/>
    </location>
</feature>
<feature type="region of interest" description="Octapeptide periodicity">
    <location>
        <begin position="180"/>
        <end position="1099"/>
    </location>
</feature>
<feature type="region of interest" description="Disordered" evidence="2">
    <location>
        <begin position="222"/>
        <end position="256"/>
    </location>
</feature>
<feature type="region of interest" description="Disordered" evidence="2">
    <location>
        <begin position="367"/>
        <end position="394"/>
    </location>
</feature>
<feature type="compositionally biased region" description="Low complexity" evidence="2">
    <location>
        <begin position="114"/>
        <end position="128"/>
    </location>
</feature>
<feature type="compositionally biased region" description="Polar residues" evidence="2">
    <location>
        <begin position="230"/>
        <end position="250"/>
    </location>
</feature>
<evidence type="ECO:0000250" key="1"/>
<evidence type="ECO:0000256" key="2">
    <source>
        <dbReference type="SAM" id="MobiDB-lite"/>
    </source>
</evidence>
<evidence type="ECO:0000305" key="3"/>
<organism>
    <name type="scientific">Pseudomonas syringae</name>
    <dbReference type="NCBI Taxonomy" id="317"/>
    <lineage>
        <taxon>Bacteria</taxon>
        <taxon>Pseudomonadati</taxon>
        <taxon>Pseudomonadota</taxon>
        <taxon>Gammaproteobacteria</taxon>
        <taxon>Pseudomonadales</taxon>
        <taxon>Pseudomonadaceae</taxon>
        <taxon>Pseudomonas</taxon>
    </lineage>
</organism>